<name>SUCC_CAMHC</name>
<comment type="function">
    <text evidence="1">Succinyl-CoA synthetase functions in the citric acid cycle (TCA), coupling the hydrolysis of succinyl-CoA to the synthesis of either ATP or GTP and thus represents the only step of substrate-level phosphorylation in the TCA. The beta subunit provides nucleotide specificity of the enzyme and binds the substrate succinate, while the binding sites for coenzyme A and phosphate are found in the alpha subunit.</text>
</comment>
<comment type="catalytic activity">
    <reaction evidence="1">
        <text>succinate + ATP + CoA = succinyl-CoA + ADP + phosphate</text>
        <dbReference type="Rhea" id="RHEA:17661"/>
        <dbReference type="ChEBI" id="CHEBI:30031"/>
        <dbReference type="ChEBI" id="CHEBI:30616"/>
        <dbReference type="ChEBI" id="CHEBI:43474"/>
        <dbReference type="ChEBI" id="CHEBI:57287"/>
        <dbReference type="ChEBI" id="CHEBI:57292"/>
        <dbReference type="ChEBI" id="CHEBI:456216"/>
        <dbReference type="EC" id="6.2.1.5"/>
    </reaction>
    <physiologicalReaction direction="right-to-left" evidence="1">
        <dbReference type="Rhea" id="RHEA:17663"/>
    </physiologicalReaction>
</comment>
<comment type="catalytic activity">
    <reaction evidence="1">
        <text>GTP + succinate + CoA = succinyl-CoA + GDP + phosphate</text>
        <dbReference type="Rhea" id="RHEA:22120"/>
        <dbReference type="ChEBI" id="CHEBI:30031"/>
        <dbReference type="ChEBI" id="CHEBI:37565"/>
        <dbReference type="ChEBI" id="CHEBI:43474"/>
        <dbReference type="ChEBI" id="CHEBI:57287"/>
        <dbReference type="ChEBI" id="CHEBI:57292"/>
        <dbReference type="ChEBI" id="CHEBI:58189"/>
    </reaction>
    <physiologicalReaction direction="right-to-left" evidence="1">
        <dbReference type="Rhea" id="RHEA:22122"/>
    </physiologicalReaction>
</comment>
<comment type="cofactor">
    <cofactor evidence="1">
        <name>Mg(2+)</name>
        <dbReference type="ChEBI" id="CHEBI:18420"/>
    </cofactor>
    <text evidence="1">Binds 1 Mg(2+) ion per subunit.</text>
</comment>
<comment type="pathway">
    <text evidence="1">Carbohydrate metabolism; tricarboxylic acid cycle; succinate from succinyl-CoA (ligase route): step 1/1.</text>
</comment>
<comment type="subunit">
    <text evidence="1">Heterotetramer of two alpha and two beta subunits.</text>
</comment>
<comment type="similarity">
    <text evidence="1">Belongs to the succinate/malate CoA ligase beta subunit family.</text>
</comment>
<keyword id="KW-0067">ATP-binding</keyword>
<keyword id="KW-0436">Ligase</keyword>
<keyword id="KW-0460">Magnesium</keyword>
<keyword id="KW-0479">Metal-binding</keyword>
<keyword id="KW-0547">Nucleotide-binding</keyword>
<keyword id="KW-1185">Reference proteome</keyword>
<keyword id="KW-0816">Tricarboxylic acid cycle</keyword>
<dbReference type="EC" id="6.2.1.5" evidence="1"/>
<dbReference type="EMBL" id="CP000776">
    <property type="protein sequence ID" value="ABS51959.1"/>
    <property type="molecule type" value="Genomic_DNA"/>
</dbReference>
<dbReference type="RefSeq" id="WP_012108992.1">
    <property type="nucleotide sequence ID" value="NC_009714.1"/>
</dbReference>
<dbReference type="SMR" id="A7I2F2"/>
<dbReference type="STRING" id="360107.CHAB381_1137"/>
<dbReference type="KEGG" id="cha:CHAB381_1137"/>
<dbReference type="eggNOG" id="COG0045">
    <property type="taxonomic scope" value="Bacteria"/>
</dbReference>
<dbReference type="HOGENOM" id="CLU_037430_0_2_7"/>
<dbReference type="OrthoDB" id="9802602at2"/>
<dbReference type="UniPathway" id="UPA00223">
    <property type="reaction ID" value="UER00999"/>
</dbReference>
<dbReference type="Proteomes" id="UP000002407">
    <property type="component" value="Chromosome"/>
</dbReference>
<dbReference type="GO" id="GO:0005829">
    <property type="term" value="C:cytosol"/>
    <property type="evidence" value="ECO:0007669"/>
    <property type="project" value="TreeGrafter"/>
</dbReference>
<dbReference type="GO" id="GO:0042709">
    <property type="term" value="C:succinate-CoA ligase complex"/>
    <property type="evidence" value="ECO:0007669"/>
    <property type="project" value="TreeGrafter"/>
</dbReference>
<dbReference type="GO" id="GO:0005524">
    <property type="term" value="F:ATP binding"/>
    <property type="evidence" value="ECO:0007669"/>
    <property type="project" value="UniProtKB-UniRule"/>
</dbReference>
<dbReference type="GO" id="GO:0000287">
    <property type="term" value="F:magnesium ion binding"/>
    <property type="evidence" value="ECO:0007669"/>
    <property type="project" value="UniProtKB-UniRule"/>
</dbReference>
<dbReference type="GO" id="GO:0004775">
    <property type="term" value="F:succinate-CoA ligase (ADP-forming) activity"/>
    <property type="evidence" value="ECO:0007669"/>
    <property type="project" value="UniProtKB-UniRule"/>
</dbReference>
<dbReference type="GO" id="GO:0004776">
    <property type="term" value="F:succinate-CoA ligase (GDP-forming) activity"/>
    <property type="evidence" value="ECO:0007669"/>
    <property type="project" value="RHEA"/>
</dbReference>
<dbReference type="GO" id="GO:0006104">
    <property type="term" value="P:succinyl-CoA metabolic process"/>
    <property type="evidence" value="ECO:0007669"/>
    <property type="project" value="TreeGrafter"/>
</dbReference>
<dbReference type="GO" id="GO:0006099">
    <property type="term" value="P:tricarboxylic acid cycle"/>
    <property type="evidence" value="ECO:0007669"/>
    <property type="project" value="UniProtKB-UniRule"/>
</dbReference>
<dbReference type="FunFam" id="3.30.1490.20:FF:000002">
    <property type="entry name" value="Succinate--CoA ligase [ADP-forming] subunit beta"/>
    <property type="match status" value="1"/>
</dbReference>
<dbReference type="FunFam" id="3.30.470.20:FF:000002">
    <property type="entry name" value="Succinate--CoA ligase [ADP-forming] subunit beta"/>
    <property type="match status" value="1"/>
</dbReference>
<dbReference type="FunFam" id="3.40.50.261:FF:000001">
    <property type="entry name" value="Succinate--CoA ligase [ADP-forming] subunit beta"/>
    <property type="match status" value="1"/>
</dbReference>
<dbReference type="Gene3D" id="3.30.1490.20">
    <property type="entry name" value="ATP-grasp fold, A domain"/>
    <property type="match status" value="1"/>
</dbReference>
<dbReference type="Gene3D" id="3.30.470.20">
    <property type="entry name" value="ATP-grasp fold, B domain"/>
    <property type="match status" value="1"/>
</dbReference>
<dbReference type="Gene3D" id="3.40.50.261">
    <property type="entry name" value="Succinyl-CoA synthetase domains"/>
    <property type="match status" value="1"/>
</dbReference>
<dbReference type="HAMAP" id="MF_00558">
    <property type="entry name" value="Succ_CoA_beta"/>
    <property type="match status" value="1"/>
</dbReference>
<dbReference type="InterPro" id="IPR013650">
    <property type="entry name" value="ATP-grasp_succ-CoA_synth-type"/>
</dbReference>
<dbReference type="InterPro" id="IPR013815">
    <property type="entry name" value="ATP_grasp_subdomain_1"/>
</dbReference>
<dbReference type="InterPro" id="IPR017866">
    <property type="entry name" value="Succ-CoA_synthase_bsu_CS"/>
</dbReference>
<dbReference type="InterPro" id="IPR005811">
    <property type="entry name" value="SUCC_ACL_C"/>
</dbReference>
<dbReference type="InterPro" id="IPR005809">
    <property type="entry name" value="Succ_CoA_ligase-like_bsu"/>
</dbReference>
<dbReference type="InterPro" id="IPR016102">
    <property type="entry name" value="Succinyl-CoA_synth-like"/>
</dbReference>
<dbReference type="NCBIfam" id="NF001913">
    <property type="entry name" value="PRK00696.1"/>
    <property type="match status" value="1"/>
</dbReference>
<dbReference type="NCBIfam" id="TIGR01016">
    <property type="entry name" value="sucCoAbeta"/>
    <property type="match status" value="1"/>
</dbReference>
<dbReference type="PANTHER" id="PTHR11815:SF10">
    <property type="entry name" value="SUCCINATE--COA LIGASE [GDP-FORMING] SUBUNIT BETA, MITOCHONDRIAL"/>
    <property type="match status" value="1"/>
</dbReference>
<dbReference type="PANTHER" id="PTHR11815">
    <property type="entry name" value="SUCCINYL-COA SYNTHETASE BETA CHAIN"/>
    <property type="match status" value="1"/>
</dbReference>
<dbReference type="Pfam" id="PF08442">
    <property type="entry name" value="ATP-grasp_2"/>
    <property type="match status" value="1"/>
</dbReference>
<dbReference type="Pfam" id="PF00549">
    <property type="entry name" value="Ligase_CoA"/>
    <property type="match status" value="1"/>
</dbReference>
<dbReference type="PIRSF" id="PIRSF001554">
    <property type="entry name" value="SucCS_beta"/>
    <property type="match status" value="1"/>
</dbReference>
<dbReference type="SUPFAM" id="SSF56059">
    <property type="entry name" value="Glutathione synthetase ATP-binding domain-like"/>
    <property type="match status" value="1"/>
</dbReference>
<dbReference type="SUPFAM" id="SSF52210">
    <property type="entry name" value="Succinyl-CoA synthetase domains"/>
    <property type="match status" value="1"/>
</dbReference>
<dbReference type="PROSITE" id="PS01217">
    <property type="entry name" value="SUCCINYL_COA_LIG_3"/>
    <property type="match status" value="1"/>
</dbReference>
<accession>A7I2F2</accession>
<feature type="chain" id="PRO_1000082052" description="Succinate--CoA ligase [ADP-forming] subunit beta">
    <location>
        <begin position="1"/>
        <end position="387"/>
    </location>
</feature>
<feature type="binding site" evidence="1">
    <location>
        <position position="46"/>
    </location>
    <ligand>
        <name>ATP</name>
        <dbReference type="ChEBI" id="CHEBI:30616"/>
    </ligand>
</feature>
<feature type="binding site" evidence="1">
    <location>
        <begin position="53"/>
        <end position="55"/>
    </location>
    <ligand>
        <name>ATP</name>
        <dbReference type="ChEBI" id="CHEBI:30616"/>
    </ligand>
</feature>
<feature type="binding site" evidence="1">
    <location>
        <position position="99"/>
    </location>
    <ligand>
        <name>ATP</name>
        <dbReference type="ChEBI" id="CHEBI:30616"/>
    </ligand>
</feature>
<feature type="binding site" evidence="1">
    <location>
        <position position="102"/>
    </location>
    <ligand>
        <name>ATP</name>
        <dbReference type="ChEBI" id="CHEBI:30616"/>
    </ligand>
</feature>
<feature type="binding site" evidence="1">
    <location>
        <position position="107"/>
    </location>
    <ligand>
        <name>ATP</name>
        <dbReference type="ChEBI" id="CHEBI:30616"/>
    </ligand>
</feature>
<feature type="binding site" evidence="1">
    <location>
        <position position="196"/>
    </location>
    <ligand>
        <name>Mg(2+)</name>
        <dbReference type="ChEBI" id="CHEBI:18420"/>
    </ligand>
</feature>
<feature type="binding site" evidence="1">
    <location>
        <position position="210"/>
    </location>
    <ligand>
        <name>Mg(2+)</name>
        <dbReference type="ChEBI" id="CHEBI:18420"/>
    </ligand>
</feature>
<feature type="binding site" evidence="1">
    <location>
        <position position="261"/>
    </location>
    <ligand>
        <name>substrate</name>
        <note>ligand shared with subunit alpha</note>
    </ligand>
</feature>
<feature type="binding site" evidence="1">
    <location>
        <begin position="318"/>
        <end position="320"/>
    </location>
    <ligand>
        <name>substrate</name>
        <note>ligand shared with subunit alpha</note>
    </ligand>
</feature>
<protein>
    <recommendedName>
        <fullName evidence="1">Succinate--CoA ligase [ADP-forming] subunit beta</fullName>
        <ecNumber evidence="1">6.2.1.5</ecNumber>
    </recommendedName>
    <alternativeName>
        <fullName evidence="1">Succinyl-CoA synthetase subunit beta</fullName>
        <shortName evidence="1">SCS-beta</shortName>
    </alternativeName>
</protein>
<organism>
    <name type="scientific">Campylobacter hominis (strain ATCC BAA-381 / DSM 21671 / CCUG 45161 / LMG 19568 / NCTC 13146 / CH001A)</name>
    <dbReference type="NCBI Taxonomy" id="360107"/>
    <lineage>
        <taxon>Bacteria</taxon>
        <taxon>Pseudomonadati</taxon>
        <taxon>Campylobacterota</taxon>
        <taxon>Epsilonproteobacteria</taxon>
        <taxon>Campylobacterales</taxon>
        <taxon>Campylobacteraceae</taxon>
        <taxon>Campylobacter</taxon>
    </lineage>
</organism>
<proteinExistence type="inferred from homology"/>
<sequence>MNIHEYQAKELCREFGINVSNGALALSADEAVEVAKKLGGNVWAVKAQIHAGGRGLGGGVKIAKNLDEVKKYANQILGMTLVTKQTGPKGKLVRKIYIEQGCNIKKEFYVSLTFNRAKEQIGLIASASGGMGIEEVDKNLIKTLNIDPQIGLKAFHAYEVGDFLGFDKDLNNKFYKFLNGLYKLYIATDANLVEINPMVLTAEDEFFALDAKMGFDDAALFRHENIAAMRDLDEEESSEVEAKQYGLSYVKLDGDIGCMVNGAGLAMGTMDTITYCGGKSANFLDVGGGASAETVAKAFEIILRDKNVKSIFVNIFGGIVRCDRIAKGILEATKLTKVEIPVVVRLDGTNAKEAIELLKEANIENIYSAHDLEEGAKLAVKLVNGEK</sequence>
<gene>
    <name evidence="1" type="primary">sucC</name>
    <name type="ordered locus">CHAB381_1137</name>
</gene>
<evidence type="ECO:0000255" key="1">
    <source>
        <dbReference type="HAMAP-Rule" id="MF_00558"/>
    </source>
</evidence>
<reference key="1">
    <citation type="submission" date="2007-07" db="EMBL/GenBank/DDBJ databases">
        <title>Complete genome sequence of Campylobacter hominis ATCC BAA-381, a commensal isolated from the human gastrointestinal tract.</title>
        <authorList>
            <person name="Fouts D.E."/>
            <person name="Mongodin E.F."/>
            <person name="Puiu D."/>
            <person name="Sebastian Y."/>
            <person name="Miller W.G."/>
            <person name="Mandrell R.E."/>
            <person name="Nelson K.E."/>
        </authorList>
    </citation>
    <scope>NUCLEOTIDE SEQUENCE [LARGE SCALE GENOMIC DNA]</scope>
    <source>
        <strain>ATCC BAA-381 / DSM 21671 / CCUG 45161 / LMG 19568 / NCTC 13146 / CH001A</strain>
    </source>
</reference>